<proteinExistence type="evidence at protein level"/>
<accession>Q8TZK2</accession>
<protein>
    <recommendedName>
        <fullName evidence="1">Protein translocase subunit SecE</fullName>
    </recommendedName>
    <alternativeName>
        <fullName evidence="1">Protein transport protein Sec61 gamma subunit homolog</fullName>
    </alternativeName>
</protein>
<organism>
    <name type="scientific">Pyrococcus furiosus (strain ATCC 43587 / DSM 3638 / JCM 8422 / Vc1)</name>
    <dbReference type="NCBI Taxonomy" id="186497"/>
    <lineage>
        <taxon>Archaea</taxon>
        <taxon>Methanobacteriati</taxon>
        <taxon>Methanobacteriota</taxon>
        <taxon>Thermococci</taxon>
        <taxon>Thermococcales</taxon>
        <taxon>Thermococcaceae</taxon>
        <taxon>Pyrococcus</taxon>
    </lineage>
</organism>
<sequence length="61" mass="6932">MAELQERIRHFWKESRRAFLVTKKPNWATYKRAAKITGLGIILIGLIGMLIRIVGILILGG</sequence>
<reference key="1">
    <citation type="journal article" date="1999" name="Genetics">
        <title>Divergence of the hyperthermophilic archaea Pyrococcus furiosus and P. horikoshii inferred from complete genomic sequences.</title>
        <authorList>
            <person name="Maeder D.L."/>
            <person name="Weiss R.B."/>
            <person name="Dunn D.M."/>
            <person name="Cherry J.L."/>
            <person name="Gonzalez J.M."/>
            <person name="DiRuggiero J."/>
            <person name="Robb F.T."/>
        </authorList>
    </citation>
    <scope>NUCLEOTIDE SEQUENCE [LARGE SCALE GENOMIC DNA]</scope>
    <source>
        <strain>ATCC 43587 / DSM 3638 / JCM 8422 / Vc1</strain>
    </source>
</reference>
<reference key="2">
    <citation type="journal article" date="2010" name="Proc. Natl. Acad. Sci. U.S.A.">
        <title>Lateral opening of a translocon upon entry of protein suggests the mechanism of insertion into membranes.</title>
        <authorList>
            <person name="Egea P.F."/>
            <person name="Stroud R.M."/>
        </authorList>
    </citation>
    <scope>X-RAY CRYSTALLOGRAPHY (2.9 ANGSTROMS) OF THE SECYE COMPLEX WITH AN OPEN LATERAL GATE</scope>
    <scope>SUBUNIT</scope>
    <scope>SUBCELLULAR LOCATION</scope>
    <source>
        <strain>ATCC 43587 / DSM 3638 / JCM 8422 / Vc1</strain>
    </source>
</reference>
<gene>
    <name evidence="1" type="primary">secE</name>
    <name type="ordered locus">PF1989</name>
</gene>
<keyword id="KW-0002">3D-structure</keyword>
<keyword id="KW-1003">Cell membrane</keyword>
<keyword id="KW-0472">Membrane</keyword>
<keyword id="KW-0653">Protein transport</keyword>
<keyword id="KW-1185">Reference proteome</keyword>
<keyword id="KW-0811">Translocation</keyword>
<keyword id="KW-0812">Transmembrane</keyword>
<keyword id="KW-1133">Transmembrane helix</keyword>
<keyword id="KW-0813">Transport</keyword>
<feature type="chain" id="PRO_0000104225" description="Protein translocase subunit SecE">
    <location>
        <begin position="1"/>
        <end position="61"/>
    </location>
</feature>
<feature type="topological domain" description="Cytoplasmic">
    <location>
        <begin position="1"/>
        <end position="34"/>
    </location>
</feature>
<feature type="transmembrane region" description="Helical">
    <location>
        <begin position="35"/>
        <end position="55"/>
    </location>
</feature>
<feature type="topological domain" description="Extracellular">
    <location>
        <begin position="56"/>
        <end position="61"/>
    </location>
</feature>
<feature type="helix" evidence="3">
    <location>
        <begin position="11"/>
        <end position="15"/>
    </location>
</feature>
<feature type="helix" evidence="3">
    <location>
        <begin position="17"/>
        <end position="21"/>
    </location>
</feature>
<feature type="helix" evidence="3">
    <location>
        <begin position="29"/>
        <end position="58"/>
    </location>
</feature>
<dbReference type="EMBL" id="AE009950">
    <property type="protein sequence ID" value="AAL82113.1"/>
    <property type="molecule type" value="Genomic_DNA"/>
</dbReference>
<dbReference type="RefSeq" id="WP_011013133.1">
    <property type="nucleotide sequence ID" value="NC_003413.1"/>
</dbReference>
<dbReference type="PDB" id="3MP7">
    <property type="method" value="X-ray"/>
    <property type="resolution" value="2.90 A"/>
    <property type="chains" value="B=1-61"/>
</dbReference>
<dbReference type="PDBsum" id="3MP7"/>
<dbReference type="SMR" id="Q8TZK2"/>
<dbReference type="DIP" id="DIP-59388N"/>
<dbReference type="IntAct" id="Q8TZK2">
    <property type="interactions" value="2"/>
</dbReference>
<dbReference type="STRING" id="186497.PF1989"/>
<dbReference type="TCDB" id="3.A.5.7.2">
    <property type="family name" value="the general secretory pathway (sec) family"/>
</dbReference>
<dbReference type="PaxDb" id="186497-PF1989"/>
<dbReference type="GeneID" id="1469873"/>
<dbReference type="KEGG" id="pfu:PF1989"/>
<dbReference type="PATRIC" id="fig|186497.12.peg.2065"/>
<dbReference type="eggNOG" id="arCOG02204">
    <property type="taxonomic scope" value="Archaea"/>
</dbReference>
<dbReference type="HOGENOM" id="CLU_191921_0_1_2"/>
<dbReference type="OrthoDB" id="86216at2157"/>
<dbReference type="EvolutionaryTrace" id="Q8TZK2"/>
<dbReference type="Proteomes" id="UP000001013">
    <property type="component" value="Chromosome"/>
</dbReference>
<dbReference type="GO" id="GO:0005886">
    <property type="term" value="C:plasma membrane"/>
    <property type="evidence" value="ECO:0007669"/>
    <property type="project" value="UniProtKB-SubCell"/>
</dbReference>
<dbReference type="GO" id="GO:0008320">
    <property type="term" value="F:protein transmembrane transporter activity"/>
    <property type="evidence" value="ECO:0007669"/>
    <property type="project" value="UniProtKB-UniRule"/>
</dbReference>
<dbReference type="GO" id="GO:0065002">
    <property type="term" value="P:intracellular protein transmembrane transport"/>
    <property type="evidence" value="ECO:0007669"/>
    <property type="project" value="UniProtKB-UniRule"/>
</dbReference>
<dbReference type="GO" id="GO:0009306">
    <property type="term" value="P:protein secretion"/>
    <property type="evidence" value="ECO:0007669"/>
    <property type="project" value="UniProtKB-UniRule"/>
</dbReference>
<dbReference type="GO" id="GO:0006605">
    <property type="term" value="P:protein targeting"/>
    <property type="evidence" value="ECO:0007669"/>
    <property type="project" value="UniProtKB-UniRule"/>
</dbReference>
<dbReference type="Gene3D" id="1.20.5.820">
    <property type="entry name" value="Preprotein translocase SecE subunit"/>
    <property type="match status" value="1"/>
</dbReference>
<dbReference type="HAMAP" id="MF_00422">
    <property type="entry name" value="SecE"/>
    <property type="match status" value="1"/>
</dbReference>
<dbReference type="InterPro" id="IPR023391">
    <property type="entry name" value="Prot_translocase_SecE_dom_sf"/>
</dbReference>
<dbReference type="InterPro" id="IPR008158">
    <property type="entry name" value="Translocase_Sec61-g"/>
</dbReference>
<dbReference type="InterPro" id="IPR001901">
    <property type="entry name" value="Translocase_SecE/Sec61-g"/>
</dbReference>
<dbReference type="NCBIfam" id="NF006909">
    <property type="entry name" value="PRK09400.1-4"/>
    <property type="match status" value="1"/>
</dbReference>
<dbReference type="NCBIfam" id="TIGR00327">
    <property type="entry name" value="secE_euk_arch"/>
    <property type="match status" value="1"/>
</dbReference>
<dbReference type="SUPFAM" id="SSF103456">
    <property type="entry name" value="Preprotein translocase SecE subunit"/>
    <property type="match status" value="1"/>
</dbReference>
<evidence type="ECO:0000255" key="1">
    <source>
        <dbReference type="HAMAP-Rule" id="MF_00422"/>
    </source>
</evidence>
<evidence type="ECO:0000269" key="2">
    <source>
    </source>
</evidence>
<evidence type="ECO:0007829" key="3">
    <source>
        <dbReference type="PDB" id="3MP7"/>
    </source>
</evidence>
<comment type="function">
    <text>Essential subunit of the protein translocation channel SecYEG. Clamps together the 2 halves of SecY. May contact the channel plug during translocation.</text>
</comment>
<comment type="subunit">
    <text evidence="2">Component of the Sec protein translocase complex. Heterotrimer consisting of alpha (SecY), beta (SecG) and gamma (SecE) subunits. The heterotrimers can form oligomers, although 1 heterotrimer is thought to be able to translocate proteins. Interacts with the ribosome. May interact with SecDF, and other proteins may be involved.</text>
</comment>
<comment type="interaction">
    <interactant intactId="EBI-9025109">
        <id>Q8TZK2</id>
    </interactant>
    <interactant intactId="EBI-9025098">
        <id>Q8U019</id>
        <label>secY</label>
    </interactant>
    <organismsDiffer>false</organismsDiffer>
    <experiments>5</experiments>
</comment>
<comment type="subcellular location">
    <subcellularLocation>
        <location evidence="1 2">Cell membrane</location>
        <topology evidence="1 2">Single-pass membrane protein</topology>
    </subcellularLocation>
</comment>
<comment type="similarity">
    <text evidence="1">Belongs to the SecE/SEC61-gamma family.</text>
</comment>
<name>SECE_PYRFU</name>